<comment type="function">
    <text evidence="1">Isomerase that catalyzes the conversion of deoxy-ribose 1-phosphate (dRib-1-P) and ribose 1-phosphate (Rib-1-P) to deoxy-ribose 5-phosphate (dRib-5-P) and ribose 5-phosphate (Rib-5-P), respectively.</text>
</comment>
<comment type="catalytic activity">
    <reaction evidence="1">
        <text>2-deoxy-alpha-D-ribose 1-phosphate = 2-deoxy-D-ribose 5-phosphate</text>
        <dbReference type="Rhea" id="RHEA:27658"/>
        <dbReference type="ChEBI" id="CHEBI:57259"/>
        <dbReference type="ChEBI" id="CHEBI:62877"/>
        <dbReference type="EC" id="5.4.2.7"/>
    </reaction>
</comment>
<comment type="catalytic activity">
    <reaction evidence="1">
        <text>alpha-D-ribose 1-phosphate = D-ribose 5-phosphate</text>
        <dbReference type="Rhea" id="RHEA:18793"/>
        <dbReference type="ChEBI" id="CHEBI:57720"/>
        <dbReference type="ChEBI" id="CHEBI:78346"/>
        <dbReference type="EC" id="5.4.2.7"/>
    </reaction>
</comment>
<comment type="cofactor">
    <cofactor evidence="1">
        <name>Mn(2+)</name>
        <dbReference type="ChEBI" id="CHEBI:29035"/>
    </cofactor>
    <text evidence="1">Binds 2 manganese ions.</text>
</comment>
<comment type="pathway">
    <text evidence="1">Carbohydrate degradation; 2-deoxy-D-ribose 1-phosphate degradation; D-glyceraldehyde 3-phosphate and acetaldehyde from 2-deoxy-alpha-D-ribose 1-phosphate: step 1/2.</text>
</comment>
<comment type="subcellular location">
    <subcellularLocation>
        <location evidence="1">Cytoplasm</location>
    </subcellularLocation>
</comment>
<comment type="similarity">
    <text evidence="1">Belongs to the phosphopentomutase family.</text>
</comment>
<evidence type="ECO:0000255" key="1">
    <source>
        <dbReference type="HAMAP-Rule" id="MF_00740"/>
    </source>
</evidence>
<dbReference type="EC" id="5.4.2.7" evidence="1"/>
<dbReference type="EMBL" id="BA000016">
    <property type="protein sequence ID" value="BAB80094.1"/>
    <property type="molecule type" value="Genomic_DNA"/>
</dbReference>
<dbReference type="RefSeq" id="WP_011009780.1">
    <property type="nucleotide sequence ID" value="NC_003366.1"/>
</dbReference>
<dbReference type="SMR" id="Q8XNE7"/>
<dbReference type="STRING" id="195102.gene:10489644"/>
<dbReference type="KEGG" id="cpe:CPE0388"/>
<dbReference type="HOGENOM" id="CLU_053861_0_0_9"/>
<dbReference type="UniPathway" id="UPA00002">
    <property type="reaction ID" value="UER00467"/>
</dbReference>
<dbReference type="Proteomes" id="UP000000818">
    <property type="component" value="Chromosome"/>
</dbReference>
<dbReference type="GO" id="GO:0005829">
    <property type="term" value="C:cytosol"/>
    <property type="evidence" value="ECO:0007669"/>
    <property type="project" value="TreeGrafter"/>
</dbReference>
<dbReference type="GO" id="GO:0000287">
    <property type="term" value="F:magnesium ion binding"/>
    <property type="evidence" value="ECO:0007669"/>
    <property type="project" value="InterPro"/>
</dbReference>
<dbReference type="GO" id="GO:0030145">
    <property type="term" value="F:manganese ion binding"/>
    <property type="evidence" value="ECO:0007669"/>
    <property type="project" value="UniProtKB-UniRule"/>
</dbReference>
<dbReference type="GO" id="GO:0008973">
    <property type="term" value="F:phosphopentomutase activity"/>
    <property type="evidence" value="ECO:0007669"/>
    <property type="project" value="UniProtKB-UniRule"/>
</dbReference>
<dbReference type="GO" id="GO:0006018">
    <property type="term" value="P:2-deoxyribose 1-phosphate catabolic process"/>
    <property type="evidence" value="ECO:0007669"/>
    <property type="project" value="UniProtKB-UniRule"/>
</dbReference>
<dbReference type="GO" id="GO:0006015">
    <property type="term" value="P:5-phosphoribose 1-diphosphate biosynthetic process"/>
    <property type="evidence" value="ECO:0007669"/>
    <property type="project" value="UniProtKB-UniPathway"/>
</dbReference>
<dbReference type="GO" id="GO:0043094">
    <property type="term" value="P:metabolic compound salvage"/>
    <property type="evidence" value="ECO:0007669"/>
    <property type="project" value="InterPro"/>
</dbReference>
<dbReference type="GO" id="GO:0009117">
    <property type="term" value="P:nucleotide metabolic process"/>
    <property type="evidence" value="ECO:0007669"/>
    <property type="project" value="InterPro"/>
</dbReference>
<dbReference type="CDD" id="cd16009">
    <property type="entry name" value="PPM"/>
    <property type="match status" value="1"/>
</dbReference>
<dbReference type="FunFam" id="3.30.70.1250:FF:000001">
    <property type="entry name" value="Phosphopentomutase"/>
    <property type="match status" value="1"/>
</dbReference>
<dbReference type="Gene3D" id="3.40.720.10">
    <property type="entry name" value="Alkaline Phosphatase, subunit A"/>
    <property type="match status" value="1"/>
</dbReference>
<dbReference type="Gene3D" id="3.30.70.1250">
    <property type="entry name" value="Phosphopentomutase"/>
    <property type="match status" value="1"/>
</dbReference>
<dbReference type="HAMAP" id="MF_00740">
    <property type="entry name" value="Phosphopentomut"/>
    <property type="match status" value="1"/>
</dbReference>
<dbReference type="InterPro" id="IPR017850">
    <property type="entry name" value="Alkaline_phosphatase_core_sf"/>
</dbReference>
<dbReference type="InterPro" id="IPR010045">
    <property type="entry name" value="DeoB"/>
</dbReference>
<dbReference type="InterPro" id="IPR006124">
    <property type="entry name" value="Metalloenzyme"/>
</dbReference>
<dbReference type="InterPro" id="IPR024052">
    <property type="entry name" value="Phosphopentomutase_DeoB_cap_sf"/>
</dbReference>
<dbReference type="NCBIfam" id="TIGR01696">
    <property type="entry name" value="deoB"/>
    <property type="match status" value="1"/>
</dbReference>
<dbReference type="NCBIfam" id="NF003766">
    <property type="entry name" value="PRK05362.1"/>
    <property type="match status" value="1"/>
</dbReference>
<dbReference type="PANTHER" id="PTHR21110">
    <property type="entry name" value="PHOSPHOPENTOMUTASE"/>
    <property type="match status" value="1"/>
</dbReference>
<dbReference type="PANTHER" id="PTHR21110:SF0">
    <property type="entry name" value="PHOSPHOPENTOMUTASE"/>
    <property type="match status" value="1"/>
</dbReference>
<dbReference type="Pfam" id="PF01676">
    <property type="entry name" value="Metalloenzyme"/>
    <property type="match status" value="1"/>
</dbReference>
<dbReference type="PIRSF" id="PIRSF001491">
    <property type="entry name" value="Ppentomutase"/>
    <property type="match status" value="1"/>
</dbReference>
<dbReference type="SUPFAM" id="SSF53649">
    <property type="entry name" value="Alkaline phosphatase-like"/>
    <property type="match status" value="1"/>
</dbReference>
<dbReference type="SUPFAM" id="SSF143856">
    <property type="entry name" value="DeoB insert domain-like"/>
    <property type="match status" value="1"/>
</dbReference>
<protein>
    <recommendedName>
        <fullName evidence="1">Phosphopentomutase</fullName>
        <ecNumber evidence="1">5.4.2.7</ecNumber>
    </recommendedName>
    <alternativeName>
        <fullName evidence="1">Phosphodeoxyribomutase</fullName>
    </alternativeName>
</protein>
<gene>
    <name evidence="1" type="primary">deoB</name>
    <name type="ordered locus">CPE0388</name>
</gene>
<reference key="1">
    <citation type="journal article" date="2002" name="Proc. Natl. Acad. Sci. U.S.A.">
        <title>Complete genome sequence of Clostridium perfringens, an anaerobic flesh-eater.</title>
        <authorList>
            <person name="Shimizu T."/>
            <person name="Ohtani K."/>
            <person name="Hirakawa H."/>
            <person name="Ohshima K."/>
            <person name="Yamashita A."/>
            <person name="Shiba T."/>
            <person name="Ogasawara N."/>
            <person name="Hattori M."/>
            <person name="Kuhara S."/>
            <person name="Hayashi H."/>
        </authorList>
    </citation>
    <scope>NUCLEOTIDE SEQUENCE [LARGE SCALE GENOMIC DNA]</scope>
    <source>
        <strain>13 / Type A</strain>
    </source>
</reference>
<proteinExistence type="inferred from homology"/>
<sequence>MSKYKRIFTIVIDSLGIGAMNDSEKYGDVNVDTLGHIAESVDTFNIPNLQKMGIANLHPIKHVAPVENPIGYQAKMAEASVGKDTMTGHWEMMGLHITKPFKTFTDTGFPQELLDELTERTGHKIVGNKSASGTEILDELGEHQIATGDMIVYTSADSVLQICGQEETFGLEELYRCCEIARELTLKDEWKVGRIIARPYLGTKKGEFKRTSNRHDYALKPYGRTVLNELKDNNFDVISVGKIKDIFDGEGITEGNKSKSSVHGMEQTLEIMDRDFTGFCFVNLVDFDALWGHRRNPQGYAEELEKFDVNLGKVLEKLHEDDLLIITADHGNDPTYTGTDHTREYVPFLAYSPSMKGHGQLETPKTFATIGATIADNFGLKMPEGTIGESVLNKLV</sequence>
<name>DEOB_CLOPE</name>
<organism>
    <name type="scientific">Clostridium perfringens (strain 13 / Type A)</name>
    <dbReference type="NCBI Taxonomy" id="195102"/>
    <lineage>
        <taxon>Bacteria</taxon>
        <taxon>Bacillati</taxon>
        <taxon>Bacillota</taxon>
        <taxon>Clostridia</taxon>
        <taxon>Eubacteriales</taxon>
        <taxon>Clostridiaceae</taxon>
        <taxon>Clostridium</taxon>
    </lineage>
</organism>
<accession>Q8XNE7</accession>
<keyword id="KW-0963">Cytoplasm</keyword>
<keyword id="KW-0413">Isomerase</keyword>
<keyword id="KW-0464">Manganese</keyword>
<keyword id="KW-0479">Metal-binding</keyword>
<keyword id="KW-1185">Reference proteome</keyword>
<feature type="chain" id="PRO_0000199816" description="Phosphopentomutase">
    <location>
        <begin position="1"/>
        <end position="396"/>
    </location>
</feature>
<feature type="binding site" evidence="1">
    <location>
        <position position="13"/>
    </location>
    <ligand>
        <name>Mn(2+)</name>
        <dbReference type="ChEBI" id="CHEBI:29035"/>
        <label>1</label>
    </ligand>
</feature>
<feature type="binding site" evidence="1">
    <location>
        <position position="288"/>
    </location>
    <ligand>
        <name>Mn(2+)</name>
        <dbReference type="ChEBI" id="CHEBI:29035"/>
        <label>2</label>
    </ligand>
</feature>
<feature type="binding site" evidence="1">
    <location>
        <position position="293"/>
    </location>
    <ligand>
        <name>Mn(2+)</name>
        <dbReference type="ChEBI" id="CHEBI:29035"/>
        <label>2</label>
    </ligand>
</feature>
<feature type="binding site" evidence="1">
    <location>
        <position position="329"/>
    </location>
    <ligand>
        <name>Mn(2+)</name>
        <dbReference type="ChEBI" id="CHEBI:29035"/>
        <label>1</label>
    </ligand>
</feature>
<feature type="binding site" evidence="1">
    <location>
        <position position="330"/>
    </location>
    <ligand>
        <name>Mn(2+)</name>
        <dbReference type="ChEBI" id="CHEBI:29035"/>
        <label>1</label>
    </ligand>
</feature>
<feature type="binding site" evidence="1">
    <location>
        <position position="341"/>
    </location>
    <ligand>
        <name>Mn(2+)</name>
        <dbReference type="ChEBI" id="CHEBI:29035"/>
        <label>2</label>
    </ligand>
</feature>